<keyword id="KW-0044">Antibiotic</keyword>
<keyword id="KW-0929">Antimicrobial</keyword>
<keyword id="KW-0211">Defensin</keyword>
<keyword id="KW-1015">Disulfide bond</keyword>
<keyword id="KW-1185">Reference proteome</keyword>
<keyword id="KW-0964">Secreted</keyword>
<keyword id="KW-0732">Signal</keyword>
<comment type="function">
    <text evidence="1">Has antibacterial activity.</text>
</comment>
<comment type="subcellular location">
    <subcellularLocation>
        <location evidence="1">Secreted</location>
    </subcellularLocation>
</comment>
<comment type="similarity">
    <text evidence="3">Belongs to the beta-defensin family.</text>
</comment>
<proteinExistence type="inferred from homology"/>
<dbReference type="EMBL" id="AY621349">
    <property type="protein sequence ID" value="AAT51888.1"/>
    <property type="molecule type" value="mRNA"/>
</dbReference>
<dbReference type="RefSeq" id="NP_001032619.1">
    <property type="nucleotide sequence ID" value="NM_001037530.2"/>
</dbReference>
<dbReference type="STRING" id="10116.ENSRNOP00000057530"/>
<dbReference type="PhosphoSitePlus" id="Q32ZH4"/>
<dbReference type="PaxDb" id="10116-ENSRNOP00000057530"/>
<dbReference type="Ensembl" id="ENSRNOT00000060803.2">
    <property type="protein sequence ID" value="ENSRNOP00000057530.1"/>
    <property type="gene ID" value="ENSRNOG00000039650.2"/>
</dbReference>
<dbReference type="GeneID" id="641655"/>
<dbReference type="KEGG" id="rno:641655"/>
<dbReference type="UCSC" id="RGD:1559758">
    <property type="organism name" value="rat"/>
</dbReference>
<dbReference type="AGR" id="RGD:1559758"/>
<dbReference type="CTD" id="654460"/>
<dbReference type="RGD" id="1559758">
    <property type="gene designation" value="Defb18"/>
</dbReference>
<dbReference type="eggNOG" id="ENOG502TEDM">
    <property type="taxonomic scope" value="Eukaryota"/>
</dbReference>
<dbReference type="GeneTree" id="ENSGT00400000023306"/>
<dbReference type="HOGENOM" id="CLU_169780_0_0_1"/>
<dbReference type="InParanoid" id="Q32ZH4"/>
<dbReference type="OMA" id="GACKPEC"/>
<dbReference type="OrthoDB" id="9834241at2759"/>
<dbReference type="PhylomeDB" id="Q32ZH4"/>
<dbReference type="Reactome" id="R-RNO-1461957">
    <property type="pathway name" value="Beta defensins"/>
</dbReference>
<dbReference type="Reactome" id="R-RNO-1461973">
    <property type="pathway name" value="Defensins"/>
</dbReference>
<dbReference type="PRO" id="PR:Q32ZH4"/>
<dbReference type="Proteomes" id="UP000002494">
    <property type="component" value="Chromosome 9"/>
</dbReference>
<dbReference type="GO" id="GO:0005576">
    <property type="term" value="C:extracellular region"/>
    <property type="evidence" value="ECO:0007669"/>
    <property type="project" value="UniProtKB-SubCell"/>
</dbReference>
<dbReference type="GO" id="GO:0042742">
    <property type="term" value="P:defense response to bacterium"/>
    <property type="evidence" value="ECO:0007669"/>
    <property type="project" value="UniProtKB-KW"/>
</dbReference>
<dbReference type="GO" id="GO:0045087">
    <property type="term" value="P:innate immune response"/>
    <property type="evidence" value="ECO:0007669"/>
    <property type="project" value="InterPro"/>
</dbReference>
<dbReference type="InterPro" id="IPR025933">
    <property type="entry name" value="Beta_defensin_dom"/>
</dbReference>
<dbReference type="PANTHER" id="PTHR39411">
    <property type="entry name" value="BETA-DEFENSIN 113"/>
    <property type="match status" value="1"/>
</dbReference>
<dbReference type="PANTHER" id="PTHR39411:SF1">
    <property type="entry name" value="BETA-DEFENSIN 113"/>
    <property type="match status" value="1"/>
</dbReference>
<dbReference type="Pfam" id="PF13841">
    <property type="entry name" value="Defensin_beta_2"/>
    <property type="match status" value="1"/>
</dbReference>
<reference key="1">
    <citation type="journal article" date="2005" name="Physiol. Genomics">
        <title>Cross-species analysis of the mammalian beta-defensin gene family: presence of syntenic gene clusters and preferential expression in the male reproductive tract.</title>
        <authorList>
            <person name="Patil A.A."/>
            <person name="Cai Y."/>
            <person name="Sang Y."/>
            <person name="Blecha F."/>
            <person name="Zhang G."/>
        </authorList>
    </citation>
    <scope>NUCLEOTIDE SEQUENCE [MRNA]</scope>
</reference>
<accession>Q32ZH4</accession>
<evidence type="ECO:0000250" key="1"/>
<evidence type="ECO:0000255" key="2"/>
<evidence type="ECO:0000305" key="3"/>
<gene>
    <name type="primary">Defb18</name>
</gene>
<organism>
    <name type="scientific">Rattus norvegicus</name>
    <name type="common">Rat</name>
    <dbReference type="NCBI Taxonomy" id="10116"/>
    <lineage>
        <taxon>Eukaryota</taxon>
        <taxon>Metazoa</taxon>
        <taxon>Chordata</taxon>
        <taxon>Craniata</taxon>
        <taxon>Vertebrata</taxon>
        <taxon>Euteleostomi</taxon>
        <taxon>Mammalia</taxon>
        <taxon>Eutheria</taxon>
        <taxon>Euarchontoglires</taxon>
        <taxon>Glires</taxon>
        <taxon>Rodentia</taxon>
        <taxon>Myomorpha</taxon>
        <taxon>Muroidea</taxon>
        <taxon>Muridae</taxon>
        <taxon>Murinae</taxon>
        <taxon>Rattus</taxon>
    </lineage>
</organism>
<protein>
    <recommendedName>
        <fullName>Beta-defensin 18</fullName>
        <shortName>BD-18</shortName>
    </recommendedName>
    <alternativeName>
        <fullName>Defensin, beta 18</fullName>
    </alternativeName>
</protein>
<sequence length="85" mass="9928">MQSAMKLFFIFLIFVFSVSCGPSAPQMKTRDVLERTHKCFLVGGECKSECSSWEYEYVFCYTGPCCVMREYKRVEKFSNTPKYTT</sequence>
<name>DFB18_RAT</name>
<feature type="signal peptide" evidence="2">
    <location>
        <begin position="1"/>
        <end position="23"/>
    </location>
</feature>
<feature type="chain" id="PRO_0000352704" description="Beta-defensin 18">
    <location>
        <begin position="24"/>
        <end position="85"/>
    </location>
</feature>
<feature type="disulfide bond" evidence="1">
    <location>
        <begin position="39"/>
        <end position="65"/>
    </location>
</feature>
<feature type="disulfide bond" evidence="1">
    <location>
        <begin position="46"/>
        <end position="60"/>
    </location>
</feature>
<feature type="disulfide bond" evidence="1">
    <location>
        <begin position="50"/>
        <end position="66"/>
    </location>
</feature>